<gene>
    <name type="primary">EXOC6</name>
    <name type="synonym">SEC15A</name>
    <name type="synonym">SEC15L</name>
    <name type="synonym">SEC15L1</name>
</gene>
<comment type="function">
    <text evidence="1">Component of the exocyst complex involved in the docking of exocytic vesicles with fusion sites on the plasma membrane. Together with RAB11A, RAB3IP, RAB8A, PARD3, PRKCI, ANXA2, CDC42 and DNMBP promotes transcytosis of PODXL to the apical membrane initiation sites (AMIS), apical surface formation and lumenogenesis (By similarity).</text>
</comment>
<comment type="subunit">
    <text evidence="1 2">The exocyst complex is composed of EXOC1, EXOC2, EXOC3, EXOC4, EXOC5, EXOC6, EXOC7 and EXOC8 (By similarity). Interacts with CNTRL. Interacts with RAB11A in a GTP-dependent manner (By similarity).</text>
</comment>
<comment type="interaction">
    <interactant intactId="EBI-1223394">
        <id>Q8TAG9</id>
    </interactant>
    <interactant intactId="EBI-949824">
        <id>O00471</id>
        <label>EXOC5</label>
    </interactant>
    <organismsDiffer>false</organismsDiffer>
    <experiments>8</experiments>
</comment>
<comment type="interaction">
    <interactant intactId="EBI-1223394">
        <id>Q8TAG9</id>
    </interactant>
    <interactant intactId="EBI-1955541">
        <id>Q53GS7</id>
        <label>GLE1</label>
    </interactant>
    <organismsDiffer>false</organismsDiffer>
    <experiments>3</experiments>
</comment>
<comment type="interaction">
    <interactant intactId="EBI-1223394">
        <id>Q8TAG9</id>
    </interactant>
    <interactant intactId="EBI-5235340">
        <id>Q7Z699</id>
        <label>SPRED1</label>
    </interactant>
    <organismsDiffer>false</organismsDiffer>
    <experiments>3</experiments>
</comment>
<comment type="subcellular location">
    <subcellularLocation>
        <location evidence="2">Cytoplasm</location>
    </subcellularLocation>
    <subcellularLocation>
        <location evidence="2">Cytoplasm</location>
        <location evidence="2">Perinuclear region</location>
    </subcellularLocation>
    <subcellularLocation>
        <location evidence="2">Cell projection</location>
        <location evidence="2">Growth cone</location>
    </subcellularLocation>
    <subcellularLocation>
        <location evidence="4">Midbody</location>
        <location evidence="4">Midbody ring</location>
    </subcellularLocation>
    <text evidence="2 4">Perinuclear in undifferentiated cells. Redistributes to growing neurites and growth cones during neuronal differentiation. Colocalizes with CNTRL/centriolin at the midbody ring (PubMed:16213214).</text>
</comment>
<comment type="alternative products">
    <event type="alternative splicing"/>
    <isoform>
        <id>Q8TAG9-1</id>
        <name>1</name>
        <sequence type="displayed"/>
    </isoform>
    <isoform>
        <id>Q8TAG9-2</id>
        <name>2</name>
        <sequence type="described" ref="VSP_047160"/>
    </isoform>
</comment>
<comment type="similarity">
    <text evidence="5">Belongs to the SEC15 family.</text>
</comment>
<comment type="sequence caution" evidence="5">
    <conflict type="erroneous initiation">
        <sequence resource="EMBL-CDS" id="AAF37262"/>
    </conflict>
    <text>Extended N-terminus.</text>
</comment>
<keyword id="KW-0025">Alternative splicing</keyword>
<keyword id="KW-0966">Cell projection</keyword>
<keyword id="KW-0963">Cytoplasm</keyword>
<keyword id="KW-0268">Exocytosis</keyword>
<keyword id="KW-0653">Protein transport</keyword>
<keyword id="KW-1267">Proteomics identification</keyword>
<keyword id="KW-1185">Reference proteome</keyword>
<keyword id="KW-0813">Transport</keyword>
<dbReference type="EMBL" id="AL157705">
    <property type="status" value="NOT_ANNOTATED_CDS"/>
    <property type="molecule type" value="Genomic_DNA"/>
</dbReference>
<dbReference type="EMBL" id="AL358613">
    <property type="status" value="NOT_ANNOTATED_CDS"/>
    <property type="molecule type" value="Genomic_DNA"/>
</dbReference>
<dbReference type="EMBL" id="AL392103">
    <property type="status" value="NOT_ANNOTATED_CDS"/>
    <property type="molecule type" value="Genomic_DNA"/>
</dbReference>
<dbReference type="EMBL" id="AL590080">
    <property type="status" value="NOT_ANNOTATED_CDS"/>
    <property type="molecule type" value="Genomic_DNA"/>
</dbReference>
<dbReference type="EMBL" id="CH471066">
    <property type="protein sequence ID" value="EAW50083.1"/>
    <property type="molecule type" value="Genomic_DNA"/>
</dbReference>
<dbReference type="EMBL" id="BC028395">
    <property type="protein sequence ID" value="AAH28395.2"/>
    <property type="molecule type" value="mRNA"/>
</dbReference>
<dbReference type="EMBL" id="AF220217">
    <property type="protein sequence ID" value="AAF37262.1"/>
    <property type="status" value="ALT_INIT"/>
    <property type="molecule type" value="mRNA"/>
</dbReference>
<dbReference type="CCDS" id="CCDS31247.1">
    <molecule id="Q8TAG9-2"/>
</dbReference>
<dbReference type="CCDS" id="CCDS7424.2">
    <molecule id="Q8TAG9-1"/>
</dbReference>
<dbReference type="RefSeq" id="NP_001013870.1">
    <molecule id="Q8TAG9-2"/>
    <property type="nucleotide sequence ID" value="NM_001013848.4"/>
</dbReference>
<dbReference type="RefSeq" id="NP_001306123.1">
    <property type="nucleotide sequence ID" value="NM_001319194.1"/>
</dbReference>
<dbReference type="RefSeq" id="NP_001306124.1">
    <property type="nucleotide sequence ID" value="NM_001319195.1"/>
</dbReference>
<dbReference type="RefSeq" id="NP_001306129.1">
    <property type="nucleotide sequence ID" value="NM_001319200.1"/>
</dbReference>
<dbReference type="RefSeq" id="NP_061926.3">
    <molecule id="Q8TAG9-1"/>
    <property type="nucleotide sequence ID" value="NM_019053.5"/>
</dbReference>
<dbReference type="RefSeq" id="XP_016871834.1">
    <molecule id="Q8TAG9-2"/>
    <property type="nucleotide sequence ID" value="XM_017016345.3"/>
</dbReference>
<dbReference type="SMR" id="Q8TAG9"/>
<dbReference type="BioGRID" id="120023">
    <property type="interactions" value="87"/>
</dbReference>
<dbReference type="ComplexPortal" id="CPX-4943">
    <property type="entry name" value="Exocyst, EXOC6 variant"/>
</dbReference>
<dbReference type="CORUM" id="Q8TAG9"/>
<dbReference type="FunCoup" id="Q8TAG9">
    <property type="interactions" value="1448"/>
</dbReference>
<dbReference type="IntAct" id="Q8TAG9">
    <property type="interactions" value="75"/>
</dbReference>
<dbReference type="MINT" id="Q8TAG9"/>
<dbReference type="STRING" id="9606.ENSP00000260762"/>
<dbReference type="TCDB" id="1.F.2.1.2">
    <property type="family name" value="the octameric exocyst (exocyst) family"/>
</dbReference>
<dbReference type="iPTMnet" id="Q8TAG9"/>
<dbReference type="PhosphoSitePlus" id="Q8TAG9"/>
<dbReference type="BioMuta" id="EXOC6"/>
<dbReference type="DMDM" id="212287926"/>
<dbReference type="jPOST" id="Q8TAG9"/>
<dbReference type="MassIVE" id="Q8TAG9"/>
<dbReference type="PaxDb" id="9606-ENSP00000260762"/>
<dbReference type="PeptideAtlas" id="Q8TAG9"/>
<dbReference type="ProteomicsDB" id="20542"/>
<dbReference type="ProteomicsDB" id="73883">
    <molecule id="Q8TAG9-1"/>
</dbReference>
<dbReference type="Pumba" id="Q8TAG9"/>
<dbReference type="Antibodypedia" id="45698">
    <property type="antibodies" value="74 antibodies from 23 providers"/>
</dbReference>
<dbReference type="DNASU" id="54536"/>
<dbReference type="Ensembl" id="ENST00000260762.10">
    <molecule id="Q8TAG9-1"/>
    <property type="protein sequence ID" value="ENSP00000260762.6"/>
    <property type="gene ID" value="ENSG00000138190.17"/>
</dbReference>
<dbReference type="Ensembl" id="ENST00000371552.8">
    <molecule id="Q8TAG9-2"/>
    <property type="protein sequence ID" value="ENSP00000360607.4"/>
    <property type="gene ID" value="ENSG00000138190.17"/>
</dbReference>
<dbReference type="Ensembl" id="ENST00000671701.1">
    <molecule id="Q8TAG9-2"/>
    <property type="protein sequence ID" value="ENSP00000500529.1"/>
    <property type="gene ID" value="ENSG00000138190.17"/>
</dbReference>
<dbReference type="Ensembl" id="ENST00000672817.1">
    <molecule id="Q8TAG9-2"/>
    <property type="protein sequence ID" value="ENSP00000500468.1"/>
    <property type="gene ID" value="ENSG00000138190.17"/>
</dbReference>
<dbReference type="GeneID" id="54536"/>
<dbReference type="KEGG" id="hsa:54536"/>
<dbReference type="MANE-Select" id="ENST00000260762.10">
    <property type="protein sequence ID" value="ENSP00000260762.6"/>
    <property type="RefSeq nucleotide sequence ID" value="NM_019053.6"/>
    <property type="RefSeq protein sequence ID" value="NP_061926.3"/>
</dbReference>
<dbReference type="UCSC" id="uc001kie.4">
    <molecule id="Q8TAG9-1"/>
    <property type="organism name" value="human"/>
</dbReference>
<dbReference type="AGR" id="HGNC:23196"/>
<dbReference type="CTD" id="54536"/>
<dbReference type="DisGeNET" id="54536"/>
<dbReference type="GeneCards" id="EXOC6"/>
<dbReference type="HGNC" id="HGNC:23196">
    <property type="gene designation" value="EXOC6"/>
</dbReference>
<dbReference type="HPA" id="ENSG00000138190">
    <property type="expression patterns" value="Tissue enriched (retina)"/>
</dbReference>
<dbReference type="MIM" id="609672">
    <property type="type" value="gene"/>
</dbReference>
<dbReference type="neXtProt" id="NX_Q8TAG9"/>
<dbReference type="OpenTargets" id="ENSG00000138190"/>
<dbReference type="PharmGKB" id="PA134908462"/>
<dbReference type="VEuPathDB" id="HostDB:ENSG00000138190"/>
<dbReference type="eggNOG" id="KOG2176">
    <property type="taxonomic scope" value="Eukaryota"/>
</dbReference>
<dbReference type="GeneTree" id="ENSGT00390000005739"/>
<dbReference type="HOGENOM" id="CLU_009437_0_0_1"/>
<dbReference type="InParanoid" id="Q8TAG9"/>
<dbReference type="OMA" id="FPFHSEQ"/>
<dbReference type="OrthoDB" id="10267033at2759"/>
<dbReference type="PAN-GO" id="Q8TAG9">
    <property type="GO annotations" value="3 GO annotations based on evolutionary models"/>
</dbReference>
<dbReference type="PhylomeDB" id="Q8TAG9"/>
<dbReference type="TreeFam" id="TF315199"/>
<dbReference type="PathwayCommons" id="Q8TAG9"/>
<dbReference type="Reactome" id="R-HSA-1445148">
    <property type="pathway name" value="Translocation of SLC2A4 (GLUT4) to the plasma membrane"/>
</dbReference>
<dbReference type="Reactome" id="R-HSA-264876">
    <property type="pathway name" value="Insulin processing"/>
</dbReference>
<dbReference type="Reactome" id="R-HSA-5620916">
    <property type="pathway name" value="VxPx cargo-targeting to cilium"/>
</dbReference>
<dbReference type="SignaLink" id="Q8TAG9"/>
<dbReference type="SIGNOR" id="Q8TAG9"/>
<dbReference type="BioGRID-ORCS" id="54536">
    <property type="hits" value="21 hits in 1157 CRISPR screens"/>
</dbReference>
<dbReference type="CD-CODE" id="FB4E32DD">
    <property type="entry name" value="Presynaptic clusters and postsynaptic densities"/>
</dbReference>
<dbReference type="ChiTaRS" id="EXOC6">
    <property type="organism name" value="human"/>
</dbReference>
<dbReference type="GenomeRNAi" id="54536"/>
<dbReference type="Pharos" id="Q8TAG9">
    <property type="development level" value="Tbio"/>
</dbReference>
<dbReference type="PRO" id="PR:Q8TAG9"/>
<dbReference type="Proteomes" id="UP000005640">
    <property type="component" value="Chromosome 10"/>
</dbReference>
<dbReference type="RNAct" id="Q8TAG9">
    <property type="molecule type" value="protein"/>
</dbReference>
<dbReference type="Bgee" id="ENSG00000138190">
    <property type="expression patterns" value="Expressed in deltoid and 190 other cell types or tissues"/>
</dbReference>
<dbReference type="ExpressionAtlas" id="Q8TAG9">
    <property type="expression patterns" value="baseline and differential"/>
</dbReference>
<dbReference type="GO" id="GO:0005829">
    <property type="term" value="C:cytosol"/>
    <property type="evidence" value="ECO:0000304"/>
    <property type="project" value="Reactome"/>
</dbReference>
<dbReference type="GO" id="GO:0000145">
    <property type="term" value="C:exocyst"/>
    <property type="evidence" value="ECO:0000318"/>
    <property type="project" value="GO_Central"/>
</dbReference>
<dbReference type="GO" id="GO:0090543">
    <property type="term" value="C:Flemming body"/>
    <property type="evidence" value="ECO:0007669"/>
    <property type="project" value="UniProtKB-SubCell"/>
</dbReference>
<dbReference type="GO" id="GO:0030426">
    <property type="term" value="C:growth cone"/>
    <property type="evidence" value="ECO:0007669"/>
    <property type="project" value="UniProtKB-SubCell"/>
</dbReference>
<dbReference type="GO" id="GO:0048471">
    <property type="term" value="C:perinuclear region of cytoplasm"/>
    <property type="evidence" value="ECO:0007669"/>
    <property type="project" value="UniProtKB-SubCell"/>
</dbReference>
<dbReference type="GO" id="GO:0005886">
    <property type="term" value="C:plasma membrane"/>
    <property type="evidence" value="ECO:0000304"/>
    <property type="project" value="Reactome"/>
</dbReference>
<dbReference type="GO" id="GO:0006887">
    <property type="term" value="P:exocytosis"/>
    <property type="evidence" value="ECO:0000318"/>
    <property type="project" value="GO_Central"/>
</dbReference>
<dbReference type="GO" id="GO:0006893">
    <property type="term" value="P:Golgi to plasma membrane transport"/>
    <property type="evidence" value="ECO:0000318"/>
    <property type="project" value="GO_Central"/>
</dbReference>
<dbReference type="GO" id="GO:0006886">
    <property type="term" value="P:intracellular protein transport"/>
    <property type="evidence" value="ECO:0007669"/>
    <property type="project" value="InterPro"/>
</dbReference>
<dbReference type="GO" id="GO:0090148">
    <property type="term" value="P:membrane fission"/>
    <property type="evidence" value="ECO:0000303"/>
    <property type="project" value="ComplexPortal"/>
</dbReference>
<dbReference type="GO" id="GO:0000281">
    <property type="term" value="P:mitotic cytokinesis"/>
    <property type="evidence" value="ECO:0000303"/>
    <property type="project" value="ComplexPortal"/>
</dbReference>
<dbReference type="GO" id="GO:0006904">
    <property type="term" value="P:vesicle docking involved in exocytosis"/>
    <property type="evidence" value="ECO:0000303"/>
    <property type="project" value="ComplexPortal"/>
</dbReference>
<dbReference type="GO" id="GO:0090522">
    <property type="term" value="P:vesicle tethering involved in exocytosis"/>
    <property type="evidence" value="ECO:0000303"/>
    <property type="project" value="ComplexPortal"/>
</dbReference>
<dbReference type="FunFam" id="1.10.357.30:FF:000001">
    <property type="entry name" value="Exocyst complex component"/>
    <property type="match status" value="1"/>
</dbReference>
<dbReference type="FunFam" id="1.20.58.670:FF:000001">
    <property type="entry name" value="Exocyst complex component"/>
    <property type="match status" value="1"/>
</dbReference>
<dbReference type="Gene3D" id="1.20.58.670">
    <property type="entry name" value="Dsl1p vesicle tethering complex, Tip20p subunit, domain D"/>
    <property type="match status" value="1"/>
</dbReference>
<dbReference type="Gene3D" id="1.10.357.30">
    <property type="entry name" value="Exocyst complex subunit Sec15 C-terminal domain, N-terminal subdomain"/>
    <property type="match status" value="1"/>
</dbReference>
<dbReference type="InterPro" id="IPR007225">
    <property type="entry name" value="EXOC6/Sec15"/>
</dbReference>
<dbReference type="InterPro" id="IPR046361">
    <property type="entry name" value="EXOC6/Sec15_C"/>
</dbReference>
<dbReference type="InterPro" id="IPR042045">
    <property type="entry name" value="EXOC6/Sec15_C_dom1"/>
</dbReference>
<dbReference type="InterPro" id="IPR048359">
    <property type="entry name" value="EXOC6_Sec15_N"/>
</dbReference>
<dbReference type="InterPro" id="IPR042044">
    <property type="entry name" value="EXOC6PINT-1/Sec15/Tip20_C_dom2"/>
</dbReference>
<dbReference type="PANTHER" id="PTHR12702:SF2">
    <property type="entry name" value="EXOCYST COMPLEX COMPONENT 6"/>
    <property type="match status" value="1"/>
</dbReference>
<dbReference type="PANTHER" id="PTHR12702">
    <property type="entry name" value="SEC15"/>
    <property type="match status" value="1"/>
</dbReference>
<dbReference type="Pfam" id="PF20651">
    <property type="entry name" value="EXOC6_Sec15_N"/>
    <property type="match status" value="1"/>
</dbReference>
<dbReference type="Pfam" id="PF04091">
    <property type="entry name" value="Sec15_C"/>
    <property type="match status" value="1"/>
</dbReference>
<dbReference type="PIRSF" id="PIRSF025007">
    <property type="entry name" value="Sec15"/>
    <property type="match status" value="1"/>
</dbReference>
<accession>Q8TAG9</accession>
<accession>E9PHI3</accession>
<accession>Q5VXH8</accession>
<accession>Q9NZ24</accession>
<evidence type="ECO:0000250" key="1"/>
<evidence type="ECO:0000250" key="2">
    <source>
        <dbReference type="UniProtKB" id="O54923"/>
    </source>
</evidence>
<evidence type="ECO:0000269" key="3">
    <source>
    </source>
</evidence>
<evidence type="ECO:0000269" key="4">
    <source>
    </source>
</evidence>
<evidence type="ECO:0000305" key="5"/>
<protein>
    <recommendedName>
        <fullName>Exocyst complex component 6</fullName>
    </recommendedName>
    <alternativeName>
        <fullName>Exocyst complex component Sec15A</fullName>
    </alternativeName>
    <alternativeName>
        <fullName>SEC15-like protein 1</fullName>
    </alternativeName>
</protein>
<sequence>MAENSESLGTVPEHERILQEIESTDTACVGPTLRSVYDDQPNAHKKFMEKLDACIRNHDKEIEKMCNFHHQGFVDAITELLKVRTDAEKLKVQVTDTNRRFQDAGKEVIVHTEDIIRCRIQQRNITTVVEKLQLCLPVLEMYSKLKEQMSAKRYYSALKTMEQLENVYFPWVSQYRFCQLMIENLPKLREDIKEISMSDLKDFLESIRKHSDKIGETAMKQAQHQKTFSVSLQKQNKMKFGKNMYINRDRIPEERNETVLKHSLEEEDENEEEILTVQDLVDFSPVYRCLHIYSVLGDEETFENYYRKQRKKQARLVLQPQSNMHETVDGYRRYFTQIVGFFVVEDHILHVTQGLVTRAYTDELWNMALSKIIAVLRAHSSYCTDPDLVLELKNLTVIFADTLQGYGFPVNRLFDLLFEIRDQYNETLLKKWAGVFRDIFEEDNYSPIPVVNEEEYKIVISKFPFQDPDLEKQSFPKKFPMSQSVPHIYIQVKEFIYASLKFSESLHRSSTEIDDMLRKSTNLLLTRTLSSCLLNLIRKPHIGLTELVQIIINTTHLEQACKYLEDFITNITNISQETVHTTRLYGLSTFKDARHAAEGEIYTKLNQKIDEFVQLADYDWTMSEPDGRASGYLMDLINFLRSIFQVFTHLPGKVAQTACMSACQHLSTSLMQMLLDSELKQISMGAVQQFNLDVIQCELFASSEPVPGFQGDTLQLAFIDLRQLLDLFMVWDWSTYLADYGQPASKYLRVNPNTALTLLEKMKDTSKKNNIFAQFRKNDRDKQKLIETVVKQLRSLVNGMSQHM</sequence>
<reference key="1">
    <citation type="journal article" date="2004" name="Nature">
        <title>The DNA sequence and comparative analysis of human chromosome 10.</title>
        <authorList>
            <person name="Deloukas P."/>
            <person name="Earthrowl M.E."/>
            <person name="Grafham D.V."/>
            <person name="Rubenfield M."/>
            <person name="French L."/>
            <person name="Steward C.A."/>
            <person name="Sims S.K."/>
            <person name="Jones M.C."/>
            <person name="Searle S."/>
            <person name="Scott C."/>
            <person name="Howe K."/>
            <person name="Hunt S.E."/>
            <person name="Andrews T.D."/>
            <person name="Gilbert J.G.R."/>
            <person name="Swarbreck D."/>
            <person name="Ashurst J.L."/>
            <person name="Taylor A."/>
            <person name="Battles J."/>
            <person name="Bird C.P."/>
            <person name="Ainscough R."/>
            <person name="Almeida J.P."/>
            <person name="Ashwell R.I.S."/>
            <person name="Ambrose K.D."/>
            <person name="Babbage A.K."/>
            <person name="Bagguley C.L."/>
            <person name="Bailey J."/>
            <person name="Banerjee R."/>
            <person name="Bates K."/>
            <person name="Beasley H."/>
            <person name="Bray-Allen S."/>
            <person name="Brown A.J."/>
            <person name="Brown J.Y."/>
            <person name="Burford D.C."/>
            <person name="Burrill W."/>
            <person name="Burton J."/>
            <person name="Cahill P."/>
            <person name="Camire D."/>
            <person name="Carter N.P."/>
            <person name="Chapman J.C."/>
            <person name="Clark S.Y."/>
            <person name="Clarke G."/>
            <person name="Clee C.M."/>
            <person name="Clegg S."/>
            <person name="Corby N."/>
            <person name="Coulson A."/>
            <person name="Dhami P."/>
            <person name="Dutta I."/>
            <person name="Dunn M."/>
            <person name="Faulkner L."/>
            <person name="Frankish A."/>
            <person name="Frankland J.A."/>
            <person name="Garner P."/>
            <person name="Garnett J."/>
            <person name="Gribble S."/>
            <person name="Griffiths C."/>
            <person name="Grocock R."/>
            <person name="Gustafson E."/>
            <person name="Hammond S."/>
            <person name="Harley J.L."/>
            <person name="Hart E."/>
            <person name="Heath P.D."/>
            <person name="Ho T.P."/>
            <person name="Hopkins B."/>
            <person name="Horne J."/>
            <person name="Howden P.J."/>
            <person name="Huckle E."/>
            <person name="Hynds C."/>
            <person name="Johnson C."/>
            <person name="Johnson D."/>
            <person name="Kana A."/>
            <person name="Kay M."/>
            <person name="Kimberley A.M."/>
            <person name="Kershaw J.K."/>
            <person name="Kokkinaki M."/>
            <person name="Laird G.K."/>
            <person name="Lawlor S."/>
            <person name="Lee H.M."/>
            <person name="Leongamornlert D.A."/>
            <person name="Laird G."/>
            <person name="Lloyd C."/>
            <person name="Lloyd D.M."/>
            <person name="Loveland J."/>
            <person name="Lovell J."/>
            <person name="McLaren S."/>
            <person name="McLay K.E."/>
            <person name="McMurray A."/>
            <person name="Mashreghi-Mohammadi M."/>
            <person name="Matthews L."/>
            <person name="Milne S."/>
            <person name="Nickerson T."/>
            <person name="Nguyen M."/>
            <person name="Overton-Larty E."/>
            <person name="Palmer S.A."/>
            <person name="Pearce A.V."/>
            <person name="Peck A.I."/>
            <person name="Pelan S."/>
            <person name="Phillimore B."/>
            <person name="Porter K."/>
            <person name="Rice C.M."/>
            <person name="Rogosin A."/>
            <person name="Ross M.T."/>
            <person name="Sarafidou T."/>
            <person name="Sehra H.K."/>
            <person name="Shownkeen R."/>
            <person name="Skuce C.D."/>
            <person name="Smith M."/>
            <person name="Standring L."/>
            <person name="Sycamore N."/>
            <person name="Tester J."/>
            <person name="Thorpe A."/>
            <person name="Torcasso W."/>
            <person name="Tracey A."/>
            <person name="Tromans A."/>
            <person name="Tsolas J."/>
            <person name="Wall M."/>
            <person name="Walsh J."/>
            <person name="Wang H."/>
            <person name="Weinstock K."/>
            <person name="West A.P."/>
            <person name="Willey D.L."/>
            <person name="Whitehead S.L."/>
            <person name="Wilming L."/>
            <person name="Wray P.W."/>
            <person name="Young L."/>
            <person name="Chen Y."/>
            <person name="Lovering R.C."/>
            <person name="Moschonas N.K."/>
            <person name="Siebert R."/>
            <person name="Fechtel K."/>
            <person name="Bentley D."/>
            <person name="Durbin R.M."/>
            <person name="Hubbard T."/>
            <person name="Doucette-Stamm L."/>
            <person name="Beck S."/>
            <person name="Smith D.R."/>
            <person name="Rogers J."/>
        </authorList>
    </citation>
    <scope>NUCLEOTIDE SEQUENCE [LARGE SCALE GENOMIC DNA]</scope>
</reference>
<reference key="2">
    <citation type="submission" date="2005-09" db="EMBL/GenBank/DDBJ databases">
        <authorList>
            <person name="Mural R.J."/>
            <person name="Istrail S."/>
            <person name="Sutton G.G."/>
            <person name="Florea L."/>
            <person name="Halpern A.L."/>
            <person name="Mobarry C.M."/>
            <person name="Lippert R."/>
            <person name="Walenz B."/>
            <person name="Shatkay H."/>
            <person name="Dew I."/>
            <person name="Miller J.R."/>
            <person name="Flanigan M.J."/>
            <person name="Edwards N.J."/>
            <person name="Bolanos R."/>
            <person name="Fasulo D."/>
            <person name="Halldorsson B.V."/>
            <person name="Hannenhalli S."/>
            <person name="Turner R."/>
            <person name="Yooseph S."/>
            <person name="Lu F."/>
            <person name="Nusskern D.R."/>
            <person name="Shue B.C."/>
            <person name="Zheng X.H."/>
            <person name="Zhong F."/>
            <person name="Delcher A.L."/>
            <person name="Huson D.H."/>
            <person name="Kravitz S.A."/>
            <person name="Mouchard L."/>
            <person name="Reinert K."/>
            <person name="Remington K.A."/>
            <person name="Clark A.G."/>
            <person name="Waterman M.S."/>
            <person name="Eichler E.E."/>
            <person name="Adams M.D."/>
            <person name="Hunkapiller M.W."/>
            <person name="Myers E.W."/>
            <person name="Venter J.C."/>
        </authorList>
    </citation>
    <scope>NUCLEOTIDE SEQUENCE [LARGE SCALE GENOMIC DNA]</scope>
</reference>
<reference key="3">
    <citation type="journal article" date="2004" name="Genome Res.">
        <title>The status, quality, and expansion of the NIH full-length cDNA project: the Mammalian Gene Collection (MGC).</title>
        <authorList>
            <consortium name="The MGC Project Team"/>
        </authorList>
    </citation>
    <scope>NUCLEOTIDE SEQUENCE [LARGE SCALE MRNA] (ISOFORM 1)</scope>
    <scope>VARIANT ILE-396</scope>
    <source>
        <tissue>Brain</tissue>
    </source>
</reference>
<reference key="4">
    <citation type="submission" date="1999-12" db="EMBL/GenBank/DDBJ databases">
        <title>Subunit structure of the human exocyst complex.</title>
        <authorList>
            <person name="Li C."/>
            <person name="Rodriguez M."/>
            <person name="Banerjee D."/>
        </authorList>
    </citation>
    <scope>NUCLEOTIDE SEQUENCE [MRNA] OF 1-153 (ISOFORM 1)</scope>
</reference>
<reference key="5">
    <citation type="journal article" date="2005" name="Cell">
        <title>Centriolin anchoring of exocyst and SNARE complexes at the midbody is required for secretory-vesicle-mediated abscission.</title>
        <authorList>
            <person name="Gromley A."/>
            <person name="Yeaman C."/>
            <person name="Rosa J."/>
            <person name="Redick S."/>
            <person name="Chen C.-T."/>
            <person name="Mirabelle S."/>
            <person name="Guha M."/>
            <person name="Sillibourne J."/>
            <person name="Doxsey S.J."/>
        </authorList>
    </citation>
    <scope>INTERACTION WITH CNTRL</scope>
    <scope>SUBCELLULAR LOCATION</scope>
</reference>
<reference key="6">
    <citation type="journal article" date="2011" name="BMC Syst. Biol.">
        <title>Initial characterization of the human central proteome.</title>
        <authorList>
            <person name="Burkard T.R."/>
            <person name="Planyavsky M."/>
            <person name="Kaupe I."/>
            <person name="Breitwieser F.P."/>
            <person name="Buerckstuemmer T."/>
            <person name="Bennett K.L."/>
            <person name="Superti-Furga G."/>
            <person name="Colinge J."/>
        </authorList>
    </citation>
    <scope>IDENTIFICATION BY MASS SPECTROMETRY [LARGE SCALE ANALYSIS]</scope>
</reference>
<name>EXOC6_HUMAN</name>
<feature type="chain" id="PRO_0000118951" description="Exocyst complex component 6">
    <location>
        <begin position="1"/>
        <end position="804"/>
    </location>
</feature>
<feature type="splice variant" id="VSP_047160" description="In isoform 2." evidence="5">
    <original>AENSESLGTVPEHERILQEIESTDTACVGP</original>
    <variation>LEEETDQTYENVLAEIQSFELPVEA</variation>
    <location>
        <begin position="2"/>
        <end position="31"/>
    </location>
</feature>
<feature type="sequence variant" id="VAR_044522" description="In dbSNP:rs1326331." evidence="3">
    <original>T</original>
    <variation>I</variation>
    <location>
        <position position="396"/>
    </location>
</feature>
<feature type="sequence variant" id="VAR_044523" description="In dbSNP:rs11187225.">
    <original>L</original>
    <variation>V</variation>
    <location>
        <position position="523"/>
    </location>
</feature>
<feature type="sequence variant" id="VAR_044524" description="In dbSNP:rs35647717.">
    <original>T</original>
    <variation>I</variation>
    <location>
        <position position="578"/>
    </location>
</feature>
<feature type="sequence conflict" description="In Ref. 3; AAH28395." evidence="5" ref="3">
    <original>R</original>
    <variation>G</variation>
    <location>
        <position position="776"/>
    </location>
</feature>
<organism>
    <name type="scientific">Homo sapiens</name>
    <name type="common">Human</name>
    <dbReference type="NCBI Taxonomy" id="9606"/>
    <lineage>
        <taxon>Eukaryota</taxon>
        <taxon>Metazoa</taxon>
        <taxon>Chordata</taxon>
        <taxon>Craniata</taxon>
        <taxon>Vertebrata</taxon>
        <taxon>Euteleostomi</taxon>
        <taxon>Mammalia</taxon>
        <taxon>Eutheria</taxon>
        <taxon>Euarchontoglires</taxon>
        <taxon>Primates</taxon>
        <taxon>Haplorrhini</taxon>
        <taxon>Catarrhini</taxon>
        <taxon>Hominidae</taxon>
        <taxon>Homo</taxon>
    </lineage>
</organism>
<proteinExistence type="evidence at protein level"/>